<name>AT2C2_MOUSE</name>
<protein>
    <recommendedName>
        <fullName>Calcium-transporting ATPase type 2C member 2</fullName>
        <shortName>ATPase 2C2</shortName>
        <ecNumber evidence="2">7.2.2.10</ecNumber>
    </recommendedName>
    <alternativeName>
        <fullName evidence="6">Ca(2+)/Mn(2+)-ATPase 2C2</fullName>
    </alternativeName>
    <alternativeName>
        <fullName>Secretory pathway Ca(2+)-transporting ATPase type 2</fullName>
        <shortName evidence="6">SPCA2</shortName>
    </alternativeName>
</protein>
<comment type="function">
    <text evidence="2 5">ATP-driven pump that supplies the Golgi apparatus with Ca(2+) and Mn(2+) ions, both essential cofactors for processing and trafficking of newly synthesized proteins in the secretory pathway. Within a catalytic cycle, acquires Ca(2+) or Mn(2+) ions on the cytoplasmic side of the membrane and delivers them to the lumenal side. The transfer of ions across the membrane is coupled to ATP hydrolysis and is associated with a transient phosphorylation that shifts the pump conformation from inward-facing to outward-facing state (By similarity). Induces Ca(2+) influx independently of its ATP-driven pump function. At the basolateral membrane of mammary epithelial cells, interacts with Ca(2+) channel ORAI1 and mediates Ca(2+) entry independently of the Ca(2+) content of endoplasmic reticulum or Golgi stores. May facilitate transepithelial transport of large quantities of Ca(2+) for milk secretion via activation of Ca(2+) influx channels at the plasma membrane and active Ca(2+) transport at the Golgi apparatus (By similarity) (PubMed:23840669).</text>
</comment>
<comment type="catalytic activity">
    <reaction evidence="2">
        <text>Ca(2+)(in) + ATP + H2O = Ca(2+)(out) + ADP + phosphate + H(+)</text>
        <dbReference type="Rhea" id="RHEA:18105"/>
        <dbReference type="ChEBI" id="CHEBI:15377"/>
        <dbReference type="ChEBI" id="CHEBI:15378"/>
        <dbReference type="ChEBI" id="CHEBI:29108"/>
        <dbReference type="ChEBI" id="CHEBI:30616"/>
        <dbReference type="ChEBI" id="CHEBI:43474"/>
        <dbReference type="ChEBI" id="CHEBI:456216"/>
        <dbReference type="EC" id="7.2.2.10"/>
    </reaction>
    <physiologicalReaction direction="left-to-right" evidence="2">
        <dbReference type="Rhea" id="RHEA:18106"/>
    </physiologicalReaction>
</comment>
<comment type="catalytic activity">
    <reaction evidence="2">
        <text>Mn(2+)(in) + ATP + H2O = Mn(2+)(out) + ADP + phosphate + H(+)</text>
        <dbReference type="Rhea" id="RHEA:66820"/>
        <dbReference type="ChEBI" id="CHEBI:15377"/>
        <dbReference type="ChEBI" id="CHEBI:15378"/>
        <dbReference type="ChEBI" id="CHEBI:29035"/>
        <dbReference type="ChEBI" id="CHEBI:30616"/>
        <dbReference type="ChEBI" id="CHEBI:43474"/>
        <dbReference type="ChEBI" id="CHEBI:456216"/>
    </reaction>
    <physiologicalReaction direction="left-to-right" evidence="2">
        <dbReference type="Rhea" id="RHEA:66821"/>
    </physiologicalReaction>
</comment>
<comment type="subunit">
    <text evidence="2 5">Interacts (via N-terminus) with ORAI1 (via N- and C-termini); this interaction regulates Ca(2+) influx at the plasma membrane.</text>
</comment>
<comment type="subcellular location">
    <subcellularLocation>
        <location evidence="4">Golgi apparatus</location>
        <location evidence="4">trans-Golgi network membrane</location>
        <topology evidence="3">Multi-pass membrane protein</topology>
    </subcellularLocation>
    <subcellularLocation>
        <location evidence="2">Cell membrane</location>
        <topology evidence="3">Multi-pass membrane protein</topology>
    </subcellularLocation>
    <subcellularLocation>
        <location evidence="5">Basolateral cell membrane</location>
        <topology evidence="3">Multi-pass membrane protein</topology>
    </subcellularLocation>
</comment>
<comment type="tissue specificity">
    <text evidence="4 5">Expressed in hippocampal neurons (at protein level) (PubMed:15677451). Expressed in lactating mammary epithelium (at protein level) (PubMed:23840669).</text>
</comment>
<comment type="similarity">
    <text evidence="7">Belongs to the cation transport ATPase (P-type) (TC 3.A.3) family. Type IIA subfamily.</text>
</comment>
<sequence>MGRRLKFLQKLAFLGQNHRYKALERDEVETLIDEQCELKAIEREKTVAALPPGEACKCSREELARAFHVDLDSGLSEFAVAQRRLVHGWNEFVTDNAEPVWKKYLDQFRNPLILLLLGSSVVSVLTKEYEDAVSIALAVLIVVTVGFIQEYRSEKSLEELTKLVPPECNCLRDGKLRHMLARDLVPGDIVSLSMGDRIPADIRLTEVTDLLVDESSFTGEVEPCGKTDSPLADGGDLSTLSNVVFMGTLVQCGKGQGVVIGTGEQSQFGEVFKMMRAEETPKTPLQKSMDKLGKQLTIFSFGIIGLLMLVGWVQGKPFLSMFTVGVSLAVAAIPEGLPIVVMVTLVLGVLRMAKKRVIVKKLPIVETLGCCNVICSDKTGTLTANEMTATQLVTSDGFHAEVSGVGYSGEGTVCLLPSKEVIKGFDNVSVGKLVEAGCVANNAVIRKNAVMGQPTEGALVVLAMKMNLGSIKDSYVRKKEIPFSSEQKWMAVRCGPKSEDGEDIYFMKGAFEEVIHHCSMYNNGGIPLPLTPQQKSYCQQEEKKMGSLGLRVLALASGPELGRLTFLGLVGIIDPPRAGVKEAVQVLSESGVSVKMVTGDALETALAIGRTIGLCNEKLKAMSGEEVEGTEQGALAARVRQVSVFFRTSPKHKVKIIKALQESGAIVAMTGDGVNDSVALKSADIGIAMGQTGTDVSKEAANMILVDDDFSAIMSAVEEGKGIFYNIKNFVRFQLSTSIAALSLITLSTVCNLPSPLNAMQILWVNIIMDGPPAQSLGVEPVDRDALRRPPRSVGDTILNRALILRVLMSAAVIIGGTLFIFWREIPANGTSTPRTTTMAFTCFVFFDLFNALSCRSQTKLIFEIGFFRNRMFLYSVLGSLLGQLAVIYAPPLQKVFQTENLSALDLLLLTGLASSVFILSELLKLWEKFLSRARPTQMLPEAV</sequence>
<organism>
    <name type="scientific">Mus musculus</name>
    <name type="common">Mouse</name>
    <dbReference type="NCBI Taxonomy" id="10090"/>
    <lineage>
        <taxon>Eukaryota</taxon>
        <taxon>Metazoa</taxon>
        <taxon>Chordata</taxon>
        <taxon>Craniata</taxon>
        <taxon>Vertebrata</taxon>
        <taxon>Euteleostomi</taxon>
        <taxon>Mammalia</taxon>
        <taxon>Eutheria</taxon>
        <taxon>Euarchontoglires</taxon>
        <taxon>Glires</taxon>
        <taxon>Rodentia</taxon>
        <taxon>Myomorpha</taxon>
        <taxon>Muroidea</taxon>
        <taxon>Muridae</taxon>
        <taxon>Murinae</taxon>
        <taxon>Mus</taxon>
        <taxon>Mus</taxon>
    </lineage>
</organism>
<reference key="1">
    <citation type="submission" date="2007-06" db="EMBL/GenBank/DDBJ databases">
        <title>SPCA2 of Mus musculus.</title>
        <authorList>
            <person name="Sepulveda M.R."/>
            <person name="Vanoevelen J."/>
            <person name="Raeymaekers L."/>
            <person name="Wuytack F."/>
        </authorList>
    </citation>
    <scope>NUCLEOTIDE SEQUENCE [MRNA]</scope>
    <source>
        <strain>SWR/J</strain>
    </source>
</reference>
<reference key="2">
    <citation type="submission" date="2005-02" db="EMBL/GenBank/DDBJ databases">
        <title>Prediction of the coding sequences of mouse homologues of KIAA gene. The complete nucleotide sequences of mouse KIAA-homologous cDNAs identified by screening of terminal sequences of cDNA clones randomly sampled from size-fractionated libraries.</title>
        <authorList>
            <person name="Okazaki N."/>
            <person name="Kikuno R.F."/>
            <person name="Ohara R."/>
            <person name="Inamoto S."/>
            <person name="Nagase T."/>
            <person name="Ohara O."/>
            <person name="Koga H."/>
        </authorList>
    </citation>
    <scope>NUCLEOTIDE SEQUENCE [LARGE SCALE MRNA] OF 88-897</scope>
    <source>
        <tissue>Brain</tissue>
    </source>
</reference>
<reference key="3">
    <citation type="journal article" date="2005" name="J. Biol. Chem.">
        <title>A novel isoform of the secretory pathway Ca2+,Mn(2+)-ATPase, hSPCA2, has unusual properties and is expressed in the brain.</title>
        <authorList>
            <person name="Xiang M."/>
            <person name="Mohamalawari D."/>
            <person name="Rao R."/>
        </authorList>
    </citation>
    <scope>SUBCELLULAR LOCATION</scope>
    <scope>TISSUE SPECIFICITY</scope>
</reference>
<reference key="4">
    <citation type="journal article" date="2013" name="PLoS ONE">
        <title>SPCA2 regulates Orai1 trafficking and store independent Ca2+ entry in a model of lactation.</title>
        <authorList>
            <person name="Cross B.M."/>
            <person name="Hack A."/>
            <person name="Reinhardt T.A."/>
            <person name="Rao R."/>
        </authorList>
    </citation>
    <scope>FUNCTION</scope>
    <scope>SUBCELLULAR LOCATION</scope>
    <scope>TISSUE SPECIFICITY</scope>
    <scope>INTERACTION WITH ORAI1</scope>
</reference>
<dbReference type="EC" id="7.2.2.10" evidence="2"/>
<dbReference type="EMBL" id="EF688288">
    <property type="protein sequence ID" value="ABS18966.1"/>
    <property type="molecule type" value="mRNA"/>
</dbReference>
<dbReference type="EMBL" id="AK220351">
    <property type="protein sequence ID" value="BAD90414.1"/>
    <property type="molecule type" value="mRNA"/>
</dbReference>
<dbReference type="CCDS" id="CCDS52684.1"/>
<dbReference type="RefSeq" id="NP_081198.1">
    <property type="nucleotide sequence ID" value="NM_026922.1"/>
</dbReference>
<dbReference type="SMR" id="A7L9Z8"/>
<dbReference type="FunCoup" id="A7L9Z8">
    <property type="interactions" value="162"/>
</dbReference>
<dbReference type="STRING" id="10090.ENSMUSP00000092794"/>
<dbReference type="PhosphoSitePlus" id="A7L9Z8"/>
<dbReference type="PaxDb" id="10090-ENSMUSP00000092794"/>
<dbReference type="PeptideAtlas" id="A7L9Z8"/>
<dbReference type="ProteomicsDB" id="281819"/>
<dbReference type="Antibodypedia" id="58367">
    <property type="antibodies" value="58 antibodies from 22 providers"/>
</dbReference>
<dbReference type="Ensembl" id="ENSMUST00000095171.5">
    <property type="protein sequence ID" value="ENSMUSP00000092794.4"/>
    <property type="gene ID" value="ENSMUSG00000034112.10"/>
</dbReference>
<dbReference type="GeneID" id="69047"/>
<dbReference type="KEGG" id="mmu:69047"/>
<dbReference type="UCSC" id="uc009nqg.1">
    <property type="organism name" value="mouse"/>
</dbReference>
<dbReference type="AGR" id="MGI:1916297"/>
<dbReference type="CTD" id="9914"/>
<dbReference type="MGI" id="MGI:1916297">
    <property type="gene designation" value="Atp2c2"/>
</dbReference>
<dbReference type="VEuPathDB" id="HostDB:ENSMUSG00000034112"/>
<dbReference type="eggNOG" id="KOG0202">
    <property type="taxonomic scope" value="Eukaryota"/>
</dbReference>
<dbReference type="GeneTree" id="ENSGT00940000160275"/>
<dbReference type="HOGENOM" id="CLU_002360_3_1_1"/>
<dbReference type="InParanoid" id="A7L9Z8"/>
<dbReference type="OMA" id="IGWVQGK"/>
<dbReference type="OrthoDB" id="3352408at2759"/>
<dbReference type="PhylomeDB" id="A7L9Z8"/>
<dbReference type="TreeFam" id="TF354251"/>
<dbReference type="Reactome" id="R-MMU-936837">
    <property type="pathway name" value="Ion transport by P-type ATPases"/>
</dbReference>
<dbReference type="BioGRID-ORCS" id="69047">
    <property type="hits" value="2 hits in 77 CRISPR screens"/>
</dbReference>
<dbReference type="ChiTaRS" id="Atp2c2">
    <property type="organism name" value="mouse"/>
</dbReference>
<dbReference type="PRO" id="PR:A7L9Z8"/>
<dbReference type="Proteomes" id="UP000000589">
    <property type="component" value="Chromosome 8"/>
</dbReference>
<dbReference type="RNAct" id="A7L9Z8">
    <property type="molecule type" value="protein"/>
</dbReference>
<dbReference type="Bgee" id="ENSMUSG00000034112">
    <property type="expression patterns" value="Expressed in prostate gland ventral lobe and 73 other cell types or tissues"/>
</dbReference>
<dbReference type="ExpressionAtlas" id="A7L9Z8">
    <property type="expression patterns" value="baseline and differential"/>
</dbReference>
<dbReference type="GO" id="GO:0016323">
    <property type="term" value="C:basolateral plasma membrane"/>
    <property type="evidence" value="ECO:0007669"/>
    <property type="project" value="UniProtKB-SubCell"/>
</dbReference>
<dbReference type="GO" id="GO:0009898">
    <property type="term" value="C:cytoplasmic side of plasma membrane"/>
    <property type="evidence" value="ECO:0000314"/>
    <property type="project" value="MGI"/>
</dbReference>
<dbReference type="GO" id="GO:0031410">
    <property type="term" value="C:cytoplasmic vesicle"/>
    <property type="evidence" value="ECO:0000314"/>
    <property type="project" value="MGI"/>
</dbReference>
<dbReference type="GO" id="GO:0048471">
    <property type="term" value="C:perinuclear region of cytoplasm"/>
    <property type="evidence" value="ECO:0000314"/>
    <property type="project" value="MGI"/>
</dbReference>
<dbReference type="GO" id="GO:0032588">
    <property type="term" value="C:trans-Golgi network membrane"/>
    <property type="evidence" value="ECO:0000314"/>
    <property type="project" value="UniProtKB"/>
</dbReference>
<dbReference type="GO" id="GO:0005524">
    <property type="term" value="F:ATP binding"/>
    <property type="evidence" value="ECO:0007669"/>
    <property type="project" value="UniProtKB-KW"/>
</dbReference>
<dbReference type="GO" id="GO:0016887">
    <property type="term" value="F:ATP hydrolysis activity"/>
    <property type="evidence" value="ECO:0007669"/>
    <property type="project" value="InterPro"/>
</dbReference>
<dbReference type="GO" id="GO:0046872">
    <property type="term" value="F:metal ion binding"/>
    <property type="evidence" value="ECO:0007669"/>
    <property type="project" value="UniProtKB-KW"/>
</dbReference>
<dbReference type="GO" id="GO:0005388">
    <property type="term" value="F:P-type calcium transporter activity"/>
    <property type="evidence" value="ECO:0000250"/>
    <property type="project" value="UniProtKB"/>
</dbReference>
<dbReference type="GO" id="GO:0140613">
    <property type="term" value="F:P-type manganese transporter activity"/>
    <property type="evidence" value="ECO:0007669"/>
    <property type="project" value="Ensembl"/>
</dbReference>
<dbReference type="GO" id="GO:0061180">
    <property type="term" value="P:mammary gland epithelium development"/>
    <property type="evidence" value="ECO:0000315"/>
    <property type="project" value="MGI"/>
</dbReference>
<dbReference type="GO" id="GO:0090280">
    <property type="term" value="P:positive regulation of calcium ion import"/>
    <property type="evidence" value="ECO:0000315"/>
    <property type="project" value="MGI"/>
</dbReference>
<dbReference type="GO" id="GO:0072659">
    <property type="term" value="P:protein localization to plasma membrane"/>
    <property type="evidence" value="ECO:0000315"/>
    <property type="project" value="MGI"/>
</dbReference>
<dbReference type="CDD" id="cd02085">
    <property type="entry name" value="P-type_ATPase_SPCA"/>
    <property type="match status" value="1"/>
</dbReference>
<dbReference type="FunFam" id="2.70.150.10:FF:000008">
    <property type="entry name" value="Calcium-transporting ATPase"/>
    <property type="match status" value="1"/>
</dbReference>
<dbReference type="FunFam" id="3.40.1110.10:FF:000006">
    <property type="entry name" value="Calcium-transporting ATPase"/>
    <property type="match status" value="1"/>
</dbReference>
<dbReference type="FunFam" id="3.40.50.1000:FF:000028">
    <property type="entry name" value="Calcium-transporting P-type ATPase, putative"/>
    <property type="match status" value="1"/>
</dbReference>
<dbReference type="FunFam" id="3.40.50.1000:FF:000001">
    <property type="entry name" value="Phospholipid-transporting ATPase IC"/>
    <property type="match status" value="1"/>
</dbReference>
<dbReference type="Gene3D" id="3.40.1110.10">
    <property type="entry name" value="Calcium-transporting ATPase, cytoplasmic domain N"/>
    <property type="match status" value="1"/>
</dbReference>
<dbReference type="Gene3D" id="2.70.150.10">
    <property type="entry name" value="Calcium-transporting ATPase, cytoplasmic transduction domain A"/>
    <property type="match status" value="1"/>
</dbReference>
<dbReference type="Gene3D" id="1.20.1110.10">
    <property type="entry name" value="Calcium-transporting ATPase, transmembrane domain"/>
    <property type="match status" value="1"/>
</dbReference>
<dbReference type="Gene3D" id="3.40.50.1000">
    <property type="entry name" value="HAD superfamily/HAD-like"/>
    <property type="match status" value="1"/>
</dbReference>
<dbReference type="InterPro" id="IPR006068">
    <property type="entry name" value="ATPase_P-typ_cation-transptr_C"/>
</dbReference>
<dbReference type="InterPro" id="IPR004014">
    <property type="entry name" value="ATPase_P-typ_cation-transptr_N"/>
</dbReference>
<dbReference type="InterPro" id="IPR023299">
    <property type="entry name" value="ATPase_P-typ_cyto_dom_N"/>
</dbReference>
<dbReference type="InterPro" id="IPR018303">
    <property type="entry name" value="ATPase_P-typ_P_site"/>
</dbReference>
<dbReference type="InterPro" id="IPR023298">
    <property type="entry name" value="ATPase_P-typ_TM_dom_sf"/>
</dbReference>
<dbReference type="InterPro" id="IPR008250">
    <property type="entry name" value="ATPase_P-typ_transduc_dom_A_sf"/>
</dbReference>
<dbReference type="InterPro" id="IPR036412">
    <property type="entry name" value="HAD-like_sf"/>
</dbReference>
<dbReference type="InterPro" id="IPR023214">
    <property type="entry name" value="HAD_sf"/>
</dbReference>
<dbReference type="InterPro" id="IPR006413">
    <property type="entry name" value="P-type_ATPase_IIA_PMR1"/>
</dbReference>
<dbReference type="InterPro" id="IPR001757">
    <property type="entry name" value="P_typ_ATPase"/>
</dbReference>
<dbReference type="InterPro" id="IPR044492">
    <property type="entry name" value="P_typ_ATPase_HD_dom"/>
</dbReference>
<dbReference type="NCBIfam" id="TIGR01522">
    <property type="entry name" value="ATPase-IIA2_Ca"/>
    <property type="match status" value="1"/>
</dbReference>
<dbReference type="NCBIfam" id="TIGR01494">
    <property type="entry name" value="ATPase_P-type"/>
    <property type="match status" value="2"/>
</dbReference>
<dbReference type="PANTHER" id="PTHR42861">
    <property type="entry name" value="CALCIUM-TRANSPORTING ATPASE"/>
    <property type="match status" value="1"/>
</dbReference>
<dbReference type="Pfam" id="PF13246">
    <property type="entry name" value="Cation_ATPase"/>
    <property type="match status" value="1"/>
</dbReference>
<dbReference type="Pfam" id="PF00689">
    <property type="entry name" value="Cation_ATPase_C"/>
    <property type="match status" value="1"/>
</dbReference>
<dbReference type="Pfam" id="PF00690">
    <property type="entry name" value="Cation_ATPase_N"/>
    <property type="match status" value="1"/>
</dbReference>
<dbReference type="Pfam" id="PF00122">
    <property type="entry name" value="E1-E2_ATPase"/>
    <property type="match status" value="1"/>
</dbReference>
<dbReference type="Pfam" id="PF00702">
    <property type="entry name" value="Hydrolase"/>
    <property type="match status" value="1"/>
</dbReference>
<dbReference type="PRINTS" id="PR00119">
    <property type="entry name" value="CATATPASE"/>
</dbReference>
<dbReference type="PRINTS" id="PR00120">
    <property type="entry name" value="HATPASE"/>
</dbReference>
<dbReference type="SFLD" id="SFLDG00002">
    <property type="entry name" value="C1.7:_P-type_atpase_like"/>
    <property type="match status" value="1"/>
</dbReference>
<dbReference type="SFLD" id="SFLDF00027">
    <property type="entry name" value="p-type_atpase"/>
    <property type="match status" value="1"/>
</dbReference>
<dbReference type="SMART" id="SM00831">
    <property type="entry name" value="Cation_ATPase_N"/>
    <property type="match status" value="1"/>
</dbReference>
<dbReference type="SUPFAM" id="SSF81653">
    <property type="entry name" value="Calcium ATPase, transduction domain A"/>
    <property type="match status" value="1"/>
</dbReference>
<dbReference type="SUPFAM" id="SSF81665">
    <property type="entry name" value="Calcium ATPase, transmembrane domain M"/>
    <property type="match status" value="1"/>
</dbReference>
<dbReference type="SUPFAM" id="SSF56784">
    <property type="entry name" value="HAD-like"/>
    <property type="match status" value="1"/>
</dbReference>
<dbReference type="SUPFAM" id="SSF81660">
    <property type="entry name" value="Metal cation-transporting ATPase, ATP-binding domain N"/>
    <property type="match status" value="1"/>
</dbReference>
<dbReference type="PROSITE" id="PS00154">
    <property type="entry name" value="ATPASE_E1_E2"/>
    <property type="match status" value="1"/>
</dbReference>
<accession>A7L9Z8</accession>
<accession>Q5DU19</accession>
<proteinExistence type="evidence at protein level"/>
<feature type="chain" id="PRO_0000356156" description="Calcium-transporting ATPase type 2C member 2">
    <location>
        <begin position="1"/>
        <end position="944"/>
    </location>
</feature>
<feature type="topological domain" description="Cytoplasmic" evidence="3">
    <location>
        <begin position="1"/>
        <end position="104"/>
    </location>
</feature>
<feature type="transmembrane region" description="Helical; Name=1" evidence="3">
    <location>
        <begin position="105"/>
        <end position="125"/>
    </location>
</feature>
<feature type="topological domain" description="Extracellular" evidence="3">
    <location>
        <begin position="126"/>
        <end position="127"/>
    </location>
</feature>
<feature type="transmembrane region" description="Helical; Name=2" evidence="3">
    <location>
        <begin position="128"/>
        <end position="148"/>
    </location>
</feature>
<feature type="topological domain" description="Cytoplasmic" evidence="3">
    <location>
        <begin position="149"/>
        <end position="229"/>
    </location>
</feature>
<feature type="transmembrane region" description="Helical; Name=3" evidence="3">
    <location>
        <begin position="230"/>
        <end position="250"/>
    </location>
</feature>
<feature type="topological domain" description="Extracellular" evidence="3">
    <location>
        <begin position="251"/>
        <end position="291"/>
    </location>
</feature>
<feature type="transmembrane region" description="Helical; Name=4" evidence="3">
    <location>
        <begin position="292"/>
        <end position="312"/>
    </location>
</feature>
<feature type="topological domain" description="Cytoplasmic" evidence="3">
    <location>
        <begin position="313"/>
        <end position="329"/>
    </location>
</feature>
<feature type="transmembrane region" description="Helical; Name=5" evidence="3">
    <location>
        <begin position="330"/>
        <end position="350"/>
    </location>
</feature>
<feature type="topological domain" description="Extracellular" evidence="3">
    <location>
        <begin position="351"/>
        <end position="748"/>
    </location>
</feature>
<feature type="transmembrane region" description="Helical; Name=6" evidence="3">
    <location>
        <begin position="749"/>
        <end position="769"/>
    </location>
</feature>
<feature type="topological domain" description="Cytoplasmic" evidence="3">
    <location>
        <begin position="770"/>
        <end position="802"/>
    </location>
</feature>
<feature type="transmembrane region" description="Helical; Name=7" evidence="3">
    <location>
        <begin position="803"/>
        <end position="823"/>
    </location>
</feature>
<feature type="topological domain" description="Extracellular" evidence="3">
    <location>
        <begin position="824"/>
        <end position="835"/>
    </location>
</feature>
<feature type="transmembrane region" description="Helical; Name=8" evidence="3">
    <location>
        <begin position="836"/>
        <end position="853"/>
    </location>
</feature>
<feature type="topological domain" description="Cytoplasmic" evidence="3">
    <location>
        <begin position="854"/>
        <end position="872"/>
    </location>
</feature>
<feature type="transmembrane region" description="Helical; Name=9" evidence="3">
    <location>
        <begin position="873"/>
        <end position="893"/>
    </location>
</feature>
<feature type="topological domain" description="Extracellular" evidence="3">
    <location>
        <begin position="894"/>
        <end position="903"/>
    </location>
</feature>
<feature type="transmembrane region" description="Helical; Name=10" evidence="3">
    <location>
        <begin position="904"/>
        <end position="924"/>
    </location>
</feature>
<feature type="topological domain" description="Cytoplasmic" evidence="3">
    <location>
        <begin position="925"/>
        <end position="944"/>
    </location>
</feature>
<feature type="region of interest" description="Interaction with ORAI1" evidence="2">
    <location>
        <begin position="69"/>
        <end position="93"/>
    </location>
</feature>
<feature type="active site" description="4-aspartylphosphate intermediate" evidence="1">
    <location>
        <position position="377"/>
    </location>
</feature>
<feature type="binding site" evidence="1">
    <location>
        <position position="330"/>
    </location>
    <ligand>
        <name>Ca(2+)</name>
        <dbReference type="ChEBI" id="CHEBI:29108"/>
        <label>2</label>
    </ligand>
</feature>
<feature type="binding site" evidence="1">
    <location>
        <position position="331"/>
    </location>
    <ligand>
        <name>Ca(2+)</name>
        <dbReference type="ChEBI" id="CHEBI:29108"/>
        <label>2</label>
    </ligand>
</feature>
<feature type="binding site" evidence="1">
    <location>
        <position position="333"/>
    </location>
    <ligand>
        <name>Ca(2+)</name>
        <dbReference type="ChEBI" id="CHEBI:29108"/>
        <label>2</label>
    </ligand>
</feature>
<feature type="binding site" evidence="1">
    <location>
        <position position="335"/>
    </location>
    <ligand>
        <name>Ca(2+)</name>
        <dbReference type="ChEBI" id="CHEBI:29108"/>
        <label>2</label>
    </ligand>
</feature>
<feature type="binding site" evidence="1">
    <location>
        <position position="672"/>
    </location>
    <ligand>
        <name>Mg(2+)</name>
        <dbReference type="ChEBI" id="CHEBI:18420"/>
    </ligand>
</feature>
<feature type="binding site" evidence="1">
    <location>
        <position position="676"/>
    </location>
    <ligand>
        <name>Mg(2+)</name>
        <dbReference type="ChEBI" id="CHEBI:18420"/>
    </ligand>
</feature>
<feature type="binding site" evidence="1">
    <location>
        <position position="766"/>
    </location>
    <ligand>
        <name>Ca(2+)</name>
        <dbReference type="ChEBI" id="CHEBI:29108"/>
        <label>2</label>
    </ligand>
</feature>
<feature type="binding site" evidence="1">
    <location>
        <position position="770"/>
    </location>
    <ligand>
        <name>Ca(2+)</name>
        <dbReference type="ChEBI" id="CHEBI:29108"/>
        <label>2</label>
    </ligand>
</feature>
<feature type="modified residue" description="Phosphothreonine" evidence="2">
    <location>
        <position position="262"/>
    </location>
</feature>
<feature type="modified residue" description="Phosphoserine" evidence="2">
    <location>
        <position position="266"/>
    </location>
</feature>
<keyword id="KW-0067">ATP-binding</keyword>
<keyword id="KW-0106">Calcium</keyword>
<keyword id="KW-0109">Calcium transport</keyword>
<keyword id="KW-1003">Cell membrane</keyword>
<keyword id="KW-0333">Golgi apparatus</keyword>
<keyword id="KW-0406">Ion transport</keyword>
<keyword id="KW-0460">Magnesium</keyword>
<keyword id="KW-0472">Membrane</keyword>
<keyword id="KW-0479">Metal-binding</keyword>
<keyword id="KW-0547">Nucleotide-binding</keyword>
<keyword id="KW-0597">Phosphoprotein</keyword>
<keyword id="KW-1185">Reference proteome</keyword>
<keyword id="KW-1278">Translocase</keyword>
<keyword id="KW-0812">Transmembrane</keyword>
<keyword id="KW-1133">Transmembrane helix</keyword>
<keyword id="KW-0813">Transport</keyword>
<gene>
    <name evidence="8" type="primary">Atp2c2</name>
    <name type="synonym">Kiaa0703</name>
    <name type="synonym">Spca2</name>
</gene>
<evidence type="ECO:0000250" key="1"/>
<evidence type="ECO:0000250" key="2">
    <source>
        <dbReference type="UniProtKB" id="O75185"/>
    </source>
</evidence>
<evidence type="ECO:0000255" key="3"/>
<evidence type="ECO:0000269" key="4">
    <source>
    </source>
</evidence>
<evidence type="ECO:0000269" key="5">
    <source>
    </source>
</evidence>
<evidence type="ECO:0000303" key="6">
    <source>
    </source>
</evidence>
<evidence type="ECO:0000305" key="7"/>
<evidence type="ECO:0000312" key="8">
    <source>
        <dbReference type="MGI" id="MGI:1916297"/>
    </source>
</evidence>